<accession>Q9UTD1</accession>
<dbReference type="EMBL" id="CU329670">
    <property type="protein sequence ID" value="CAB61457.1"/>
    <property type="molecule type" value="Genomic_DNA"/>
</dbReference>
<dbReference type="PIR" id="T50164">
    <property type="entry name" value="T50164"/>
</dbReference>
<dbReference type="RefSeq" id="NP_592962.1">
    <property type="nucleotide sequence ID" value="NM_001018362.2"/>
</dbReference>
<dbReference type="BioGRID" id="278008">
    <property type="interactions" value="17"/>
</dbReference>
<dbReference type="FunCoup" id="Q9UTD1">
    <property type="interactions" value="95"/>
</dbReference>
<dbReference type="STRING" id="284812.Q9UTD1"/>
<dbReference type="PaxDb" id="4896-SPAC227.08c.1"/>
<dbReference type="EnsemblFungi" id="SPAC227.08c.1">
    <property type="protein sequence ID" value="SPAC227.08c.1:pep"/>
    <property type="gene ID" value="SPAC227.08c"/>
</dbReference>
<dbReference type="GeneID" id="2541506"/>
<dbReference type="KEGG" id="spo:2541506"/>
<dbReference type="PomBase" id="SPAC227.08c">
    <property type="gene designation" value="yth1"/>
</dbReference>
<dbReference type="VEuPathDB" id="FungiDB:SPAC227.08c"/>
<dbReference type="eggNOG" id="KOG1040">
    <property type="taxonomic scope" value="Eukaryota"/>
</dbReference>
<dbReference type="HOGENOM" id="CLU_024513_1_2_1"/>
<dbReference type="InParanoid" id="Q9UTD1"/>
<dbReference type="OMA" id="EQCDFLH"/>
<dbReference type="PhylomeDB" id="Q9UTD1"/>
<dbReference type="PRO" id="PR:Q9UTD1"/>
<dbReference type="Proteomes" id="UP000002485">
    <property type="component" value="Chromosome I"/>
</dbReference>
<dbReference type="GO" id="GO:0005829">
    <property type="term" value="C:cytosol"/>
    <property type="evidence" value="ECO:0007005"/>
    <property type="project" value="PomBase"/>
</dbReference>
<dbReference type="GO" id="GO:0005847">
    <property type="term" value="C:mRNA cleavage and polyadenylation specificity factor complex"/>
    <property type="evidence" value="ECO:0000314"/>
    <property type="project" value="PomBase"/>
</dbReference>
<dbReference type="GO" id="GO:0005634">
    <property type="term" value="C:nucleus"/>
    <property type="evidence" value="ECO:0007005"/>
    <property type="project" value="PomBase"/>
</dbReference>
<dbReference type="GO" id="GO:0003723">
    <property type="term" value="F:RNA binding"/>
    <property type="evidence" value="ECO:0007669"/>
    <property type="project" value="UniProtKB-KW"/>
</dbReference>
<dbReference type="GO" id="GO:0008270">
    <property type="term" value="F:zinc ion binding"/>
    <property type="evidence" value="ECO:0007669"/>
    <property type="project" value="UniProtKB-KW"/>
</dbReference>
<dbReference type="GO" id="GO:0180010">
    <property type="term" value="P:co-transcriptional mRNA 3'-end processing, cleavage and polyadenylation pathway"/>
    <property type="evidence" value="ECO:0000305"/>
    <property type="project" value="PomBase"/>
</dbReference>
<dbReference type="FunFam" id="4.10.1000.10:FF:000012">
    <property type="entry name" value="cleavage and polyadenylation specificity factor subunit 4"/>
    <property type="match status" value="1"/>
</dbReference>
<dbReference type="Gene3D" id="4.10.1000.10">
    <property type="entry name" value="Zinc finger, CCCH-type"/>
    <property type="match status" value="2"/>
</dbReference>
<dbReference type="InterPro" id="IPR045348">
    <property type="entry name" value="CPSF4/Yth1"/>
</dbReference>
<dbReference type="InterPro" id="IPR000571">
    <property type="entry name" value="Znf_CCCH"/>
</dbReference>
<dbReference type="InterPro" id="IPR036855">
    <property type="entry name" value="Znf_CCCH_sf"/>
</dbReference>
<dbReference type="PANTHER" id="PTHR23102:SF24">
    <property type="entry name" value="CLEAVAGE AND POLYADENYLATION SPECIFICITY FACTOR SUBUNIT 4"/>
    <property type="match status" value="1"/>
</dbReference>
<dbReference type="PANTHER" id="PTHR23102">
    <property type="entry name" value="CLEAVAGE AND POLYADENYLATION SPECIFICITY FACTOR SUBUNIT 4-RELATED"/>
    <property type="match status" value="1"/>
</dbReference>
<dbReference type="Pfam" id="PF00642">
    <property type="entry name" value="zf-CCCH"/>
    <property type="match status" value="3"/>
</dbReference>
<dbReference type="SMART" id="SM00356">
    <property type="entry name" value="ZnF_C3H1"/>
    <property type="match status" value="4"/>
</dbReference>
<dbReference type="SUPFAM" id="SSF90229">
    <property type="entry name" value="CCCH zinc finger"/>
    <property type="match status" value="2"/>
</dbReference>
<dbReference type="PROSITE" id="PS50103">
    <property type="entry name" value="ZF_C3H1"/>
    <property type="match status" value="4"/>
</dbReference>
<sequence length="170" mass="19379">MTDYIKDKAIAADFSSVQFRFDNYLKQNFNFGRSALLNSGNGRDSGSKMGSVVCKHWLRGLCKKGEQCDFLHEYNLKKMPPCHFYAERGWCSNGEECLYLHLDPSKQVGVCAWYNMGFCPLGPICRGKHVRKPRPCPKYLAGFCPLGPNCPDAHPKHSEPPHPPQKRKDW</sequence>
<organism>
    <name type="scientific">Schizosaccharomyces pombe (strain 972 / ATCC 24843)</name>
    <name type="common">Fission yeast</name>
    <dbReference type="NCBI Taxonomy" id="284812"/>
    <lineage>
        <taxon>Eukaryota</taxon>
        <taxon>Fungi</taxon>
        <taxon>Dikarya</taxon>
        <taxon>Ascomycota</taxon>
        <taxon>Taphrinomycotina</taxon>
        <taxon>Schizosaccharomycetes</taxon>
        <taxon>Schizosaccharomycetales</taxon>
        <taxon>Schizosaccharomycetaceae</taxon>
        <taxon>Schizosaccharomyces</taxon>
    </lineage>
</organism>
<protein>
    <recommendedName>
        <fullName>mRNA 3'-end-processing protein yth1</fullName>
    </recommendedName>
</protein>
<gene>
    <name type="primary">yth1</name>
    <name type="ORF">SPAC227.08c</name>
</gene>
<comment type="function">
    <text evidence="1">Component of the cleavage factor I (CF I) involved in pre-mRNA 3'-end processing.</text>
</comment>
<comment type="subcellular location">
    <subcellularLocation>
        <location evidence="1">Nucleus</location>
    </subcellularLocation>
</comment>
<comment type="similarity">
    <text evidence="3">Belongs to the CPSF4/YTH1 family.</text>
</comment>
<name>YTH1_SCHPO</name>
<evidence type="ECO:0000250" key="1"/>
<evidence type="ECO:0000255" key="2">
    <source>
        <dbReference type="PROSITE-ProRule" id="PRU00723"/>
    </source>
</evidence>
<evidence type="ECO:0000305" key="3"/>
<feature type="chain" id="PRO_0000238542" description="mRNA 3'-end-processing protein yth1">
    <location>
        <begin position="1"/>
        <end position="170"/>
    </location>
</feature>
<feature type="zinc finger region" description="C3H1-type 1" evidence="2">
    <location>
        <begin position="48"/>
        <end position="75"/>
    </location>
</feature>
<feature type="zinc finger region" description="C3H1-type 2" evidence="2">
    <location>
        <begin position="76"/>
        <end position="104"/>
    </location>
</feature>
<feature type="zinc finger region" description="C3H1-type 3" evidence="2">
    <location>
        <begin position="105"/>
        <end position="130"/>
    </location>
</feature>
<feature type="zinc finger region" description="C3H1-type 4" evidence="2">
    <location>
        <begin position="131"/>
        <end position="157"/>
    </location>
</feature>
<proteinExistence type="inferred from homology"/>
<keyword id="KW-0479">Metal-binding</keyword>
<keyword id="KW-0507">mRNA processing</keyword>
<keyword id="KW-0539">Nucleus</keyword>
<keyword id="KW-1185">Reference proteome</keyword>
<keyword id="KW-0677">Repeat</keyword>
<keyword id="KW-0694">RNA-binding</keyword>
<keyword id="KW-0862">Zinc</keyword>
<keyword id="KW-0863">Zinc-finger</keyword>
<reference key="1">
    <citation type="journal article" date="2002" name="Nature">
        <title>The genome sequence of Schizosaccharomyces pombe.</title>
        <authorList>
            <person name="Wood V."/>
            <person name="Gwilliam R."/>
            <person name="Rajandream M.A."/>
            <person name="Lyne M.H."/>
            <person name="Lyne R."/>
            <person name="Stewart A."/>
            <person name="Sgouros J.G."/>
            <person name="Peat N."/>
            <person name="Hayles J."/>
            <person name="Baker S.G."/>
            <person name="Basham D."/>
            <person name="Bowman S."/>
            <person name="Brooks K."/>
            <person name="Brown D."/>
            <person name="Brown S."/>
            <person name="Chillingworth T."/>
            <person name="Churcher C.M."/>
            <person name="Collins M."/>
            <person name="Connor R."/>
            <person name="Cronin A."/>
            <person name="Davis P."/>
            <person name="Feltwell T."/>
            <person name="Fraser A."/>
            <person name="Gentles S."/>
            <person name="Goble A."/>
            <person name="Hamlin N."/>
            <person name="Harris D.E."/>
            <person name="Hidalgo J."/>
            <person name="Hodgson G."/>
            <person name="Holroyd S."/>
            <person name="Hornsby T."/>
            <person name="Howarth S."/>
            <person name="Huckle E.J."/>
            <person name="Hunt S."/>
            <person name="Jagels K."/>
            <person name="James K.D."/>
            <person name="Jones L."/>
            <person name="Jones M."/>
            <person name="Leather S."/>
            <person name="McDonald S."/>
            <person name="McLean J."/>
            <person name="Mooney P."/>
            <person name="Moule S."/>
            <person name="Mungall K.L."/>
            <person name="Murphy L.D."/>
            <person name="Niblett D."/>
            <person name="Odell C."/>
            <person name="Oliver K."/>
            <person name="O'Neil S."/>
            <person name="Pearson D."/>
            <person name="Quail M.A."/>
            <person name="Rabbinowitsch E."/>
            <person name="Rutherford K.M."/>
            <person name="Rutter S."/>
            <person name="Saunders D."/>
            <person name="Seeger K."/>
            <person name="Sharp S."/>
            <person name="Skelton J."/>
            <person name="Simmonds M.N."/>
            <person name="Squares R."/>
            <person name="Squares S."/>
            <person name="Stevens K."/>
            <person name="Taylor K."/>
            <person name="Taylor R.G."/>
            <person name="Tivey A."/>
            <person name="Walsh S.V."/>
            <person name="Warren T."/>
            <person name="Whitehead S."/>
            <person name="Woodward J.R."/>
            <person name="Volckaert G."/>
            <person name="Aert R."/>
            <person name="Robben J."/>
            <person name="Grymonprez B."/>
            <person name="Weltjens I."/>
            <person name="Vanstreels E."/>
            <person name="Rieger M."/>
            <person name="Schaefer M."/>
            <person name="Mueller-Auer S."/>
            <person name="Gabel C."/>
            <person name="Fuchs M."/>
            <person name="Duesterhoeft A."/>
            <person name="Fritzc C."/>
            <person name="Holzer E."/>
            <person name="Moestl D."/>
            <person name="Hilbert H."/>
            <person name="Borzym K."/>
            <person name="Langer I."/>
            <person name="Beck A."/>
            <person name="Lehrach H."/>
            <person name="Reinhardt R."/>
            <person name="Pohl T.M."/>
            <person name="Eger P."/>
            <person name="Zimmermann W."/>
            <person name="Wedler H."/>
            <person name="Wambutt R."/>
            <person name="Purnelle B."/>
            <person name="Goffeau A."/>
            <person name="Cadieu E."/>
            <person name="Dreano S."/>
            <person name="Gloux S."/>
            <person name="Lelaure V."/>
            <person name="Mottier S."/>
            <person name="Galibert F."/>
            <person name="Aves S.J."/>
            <person name="Xiang Z."/>
            <person name="Hunt C."/>
            <person name="Moore K."/>
            <person name="Hurst S.M."/>
            <person name="Lucas M."/>
            <person name="Rochet M."/>
            <person name="Gaillardin C."/>
            <person name="Tallada V.A."/>
            <person name="Garzon A."/>
            <person name="Thode G."/>
            <person name="Daga R.R."/>
            <person name="Cruzado L."/>
            <person name="Jimenez J."/>
            <person name="Sanchez M."/>
            <person name="del Rey F."/>
            <person name="Benito J."/>
            <person name="Dominguez A."/>
            <person name="Revuelta J.L."/>
            <person name="Moreno S."/>
            <person name="Armstrong J."/>
            <person name="Forsburg S.L."/>
            <person name="Cerutti L."/>
            <person name="Lowe T."/>
            <person name="McCombie W.R."/>
            <person name="Paulsen I."/>
            <person name="Potashkin J."/>
            <person name="Shpakovski G.V."/>
            <person name="Ussery D."/>
            <person name="Barrell B.G."/>
            <person name="Nurse P."/>
        </authorList>
    </citation>
    <scope>NUCLEOTIDE SEQUENCE [LARGE SCALE GENOMIC DNA]</scope>
    <source>
        <strain>972 / ATCC 24843</strain>
    </source>
</reference>